<proteinExistence type="inferred from homology"/>
<evidence type="ECO:0000255" key="1">
    <source>
        <dbReference type="HAMAP-Rule" id="MF_01320"/>
    </source>
</evidence>
<evidence type="ECO:0000256" key="2">
    <source>
        <dbReference type="SAM" id="MobiDB-lite"/>
    </source>
</evidence>
<evidence type="ECO:0000305" key="3"/>
<feature type="chain" id="PRO_0000129722" description="Large ribosomal subunit protein uL2">
    <location>
        <begin position="1"/>
        <end position="246"/>
    </location>
</feature>
<feature type="region of interest" description="Disordered" evidence="2">
    <location>
        <begin position="197"/>
        <end position="227"/>
    </location>
</feature>
<reference key="1">
    <citation type="journal article" date="2002" name="Proc. Natl. Acad. Sci. U.S.A.">
        <title>Genome sequence of the hyperthermophilic crenarchaeon Pyrobaculum aerophilum.</title>
        <authorList>
            <person name="Fitz-Gibbon S.T."/>
            <person name="Ladner H."/>
            <person name="Kim U.-J."/>
            <person name="Stetter K.O."/>
            <person name="Simon M.I."/>
            <person name="Miller J.H."/>
        </authorList>
    </citation>
    <scope>NUCLEOTIDE SEQUENCE [LARGE SCALE GENOMIC DNA]</scope>
    <source>
        <strain>ATCC 51768 / DSM 7523 / JCM 9630 / CIP 104966 / NBRC 100827 / IM2</strain>
    </source>
</reference>
<organism>
    <name type="scientific">Pyrobaculum aerophilum (strain ATCC 51768 / DSM 7523 / JCM 9630 / CIP 104966 / NBRC 100827 / IM2)</name>
    <dbReference type="NCBI Taxonomy" id="178306"/>
    <lineage>
        <taxon>Archaea</taxon>
        <taxon>Thermoproteota</taxon>
        <taxon>Thermoprotei</taxon>
        <taxon>Thermoproteales</taxon>
        <taxon>Thermoproteaceae</taxon>
        <taxon>Pyrobaculum</taxon>
    </lineage>
</organism>
<protein>
    <recommendedName>
        <fullName evidence="1">Large ribosomal subunit protein uL2</fullName>
    </recommendedName>
    <alternativeName>
        <fullName evidence="3">50S ribosomal protein L2</fullName>
    </alternativeName>
</protein>
<name>RL2_PYRAE</name>
<comment type="function">
    <text evidence="1">One of the primary rRNA binding proteins. Required for association of the 30S and 50S subunits to form the 70S ribosome, for tRNA binding and peptide bond formation. It has been suggested to have peptidyltransferase activity; this is somewhat controversial. Makes several contacts with the 16S rRNA in the 70S ribosome.</text>
</comment>
<comment type="subunit">
    <text evidence="1">Part of the 50S ribosomal subunit. Forms a bridge to the 30S subunit in the 70S ribosome.</text>
</comment>
<comment type="similarity">
    <text evidence="1">Belongs to the universal ribosomal protein uL2 family.</text>
</comment>
<keyword id="KW-1185">Reference proteome</keyword>
<keyword id="KW-0687">Ribonucleoprotein</keyword>
<keyword id="KW-0689">Ribosomal protein</keyword>
<keyword id="KW-0694">RNA-binding</keyword>
<keyword id="KW-0699">rRNA-binding</keyword>
<dbReference type="EMBL" id="AE009441">
    <property type="protein sequence ID" value="AAL63038.1"/>
    <property type="molecule type" value="Genomic_DNA"/>
</dbReference>
<dbReference type="RefSeq" id="WP_011007510.1">
    <property type="nucleotide sequence ID" value="NC_003364.1"/>
</dbReference>
<dbReference type="SMR" id="Q8ZYF5"/>
<dbReference type="FunCoup" id="Q8ZYF5">
    <property type="interactions" value="181"/>
</dbReference>
<dbReference type="STRING" id="178306.PAE0803"/>
<dbReference type="EnsemblBacteria" id="AAL63038">
    <property type="protein sequence ID" value="AAL63038"/>
    <property type="gene ID" value="PAE0803"/>
</dbReference>
<dbReference type="GeneID" id="1465266"/>
<dbReference type="KEGG" id="pai:PAE0803"/>
<dbReference type="PATRIC" id="fig|178306.9.peg.587"/>
<dbReference type="eggNOG" id="arCOG04067">
    <property type="taxonomic scope" value="Archaea"/>
</dbReference>
<dbReference type="HOGENOM" id="CLU_036235_0_3_2"/>
<dbReference type="InParanoid" id="Q8ZYF5"/>
<dbReference type="Proteomes" id="UP000002439">
    <property type="component" value="Chromosome"/>
</dbReference>
<dbReference type="GO" id="GO:0022625">
    <property type="term" value="C:cytosolic large ribosomal subunit"/>
    <property type="evidence" value="ECO:0000318"/>
    <property type="project" value="GO_Central"/>
</dbReference>
<dbReference type="GO" id="GO:0003723">
    <property type="term" value="F:RNA binding"/>
    <property type="evidence" value="ECO:0000318"/>
    <property type="project" value="GO_Central"/>
</dbReference>
<dbReference type="GO" id="GO:0019843">
    <property type="term" value="F:rRNA binding"/>
    <property type="evidence" value="ECO:0007669"/>
    <property type="project" value="UniProtKB-UniRule"/>
</dbReference>
<dbReference type="GO" id="GO:0003735">
    <property type="term" value="F:structural constituent of ribosome"/>
    <property type="evidence" value="ECO:0000318"/>
    <property type="project" value="GO_Central"/>
</dbReference>
<dbReference type="GO" id="GO:0002181">
    <property type="term" value="P:cytoplasmic translation"/>
    <property type="evidence" value="ECO:0000318"/>
    <property type="project" value="GO_Central"/>
</dbReference>
<dbReference type="FunFam" id="4.10.950.10:FF:000002">
    <property type="entry name" value="60S ribosomal protein L2"/>
    <property type="match status" value="1"/>
</dbReference>
<dbReference type="FunFam" id="2.30.30.30:FF:000006">
    <property type="entry name" value="60S ribosomal protein L8"/>
    <property type="match status" value="1"/>
</dbReference>
<dbReference type="Gene3D" id="2.30.30.30">
    <property type="match status" value="1"/>
</dbReference>
<dbReference type="Gene3D" id="2.40.50.140">
    <property type="entry name" value="Nucleic acid-binding proteins"/>
    <property type="match status" value="1"/>
</dbReference>
<dbReference type="Gene3D" id="4.10.950.10">
    <property type="entry name" value="Ribosomal protein L2, domain 3"/>
    <property type="match status" value="1"/>
</dbReference>
<dbReference type="HAMAP" id="MF_01320_A">
    <property type="entry name" value="Ribosomal_uL2_A"/>
    <property type="match status" value="1"/>
</dbReference>
<dbReference type="InterPro" id="IPR012340">
    <property type="entry name" value="NA-bd_OB-fold"/>
</dbReference>
<dbReference type="InterPro" id="IPR014722">
    <property type="entry name" value="Rib_uL2_dom2"/>
</dbReference>
<dbReference type="InterPro" id="IPR002171">
    <property type="entry name" value="Ribosomal_uL2"/>
</dbReference>
<dbReference type="InterPro" id="IPR023672">
    <property type="entry name" value="Ribosomal_uL2_arc_euk"/>
</dbReference>
<dbReference type="InterPro" id="IPR022669">
    <property type="entry name" value="Ribosomal_uL2_C"/>
</dbReference>
<dbReference type="InterPro" id="IPR014726">
    <property type="entry name" value="Ribosomal_uL2_dom3"/>
</dbReference>
<dbReference type="InterPro" id="IPR022666">
    <property type="entry name" value="Ribosomal_uL2_RNA-bd_dom"/>
</dbReference>
<dbReference type="InterPro" id="IPR008991">
    <property type="entry name" value="Translation_prot_SH3-like_sf"/>
</dbReference>
<dbReference type="NCBIfam" id="NF007180">
    <property type="entry name" value="PRK09612.1"/>
    <property type="match status" value="1"/>
</dbReference>
<dbReference type="PANTHER" id="PTHR13691:SF16">
    <property type="entry name" value="LARGE RIBOSOMAL SUBUNIT PROTEIN UL2"/>
    <property type="match status" value="1"/>
</dbReference>
<dbReference type="PANTHER" id="PTHR13691">
    <property type="entry name" value="RIBOSOMAL PROTEIN L2"/>
    <property type="match status" value="1"/>
</dbReference>
<dbReference type="Pfam" id="PF00181">
    <property type="entry name" value="Ribosomal_L2"/>
    <property type="match status" value="1"/>
</dbReference>
<dbReference type="Pfam" id="PF03947">
    <property type="entry name" value="Ribosomal_L2_C"/>
    <property type="match status" value="1"/>
</dbReference>
<dbReference type="PIRSF" id="PIRSF002158">
    <property type="entry name" value="Ribosomal_L2"/>
    <property type="match status" value="1"/>
</dbReference>
<dbReference type="SMART" id="SM01383">
    <property type="entry name" value="Ribosomal_L2"/>
    <property type="match status" value="1"/>
</dbReference>
<dbReference type="SMART" id="SM01382">
    <property type="entry name" value="Ribosomal_L2_C"/>
    <property type="match status" value="1"/>
</dbReference>
<dbReference type="SUPFAM" id="SSF50249">
    <property type="entry name" value="Nucleic acid-binding proteins"/>
    <property type="match status" value="1"/>
</dbReference>
<dbReference type="SUPFAM" id="SSF50104">
    <property type="entry name" value="Translation proteins SH3-like domain"/>
    <property type="match status" value="1"/>
</dbReference>
<sequence>MGKRILVQRRGRGGSQFRSPSWKRDGPVRYPPLGVISGKGYVVDILHEPGLNAPVAKIVTENGVEFFNYAAEGLYVGQVVEIGKGASPKTGNIMILGEIPEGTMIFNVEKRAGDGGKFARAGGTYAVVIGQKPEENKTIIRLPSGRTVEVDSRGRATVGIVAGGGRIEKPFLKAGKKYHRARAKAWKYPTVRGKAMSPYAHPHGGGSHQKGGTPVPKTAPPGQKVGFIGSRCTGRGCVRARAQQKQ</sequence>
<gene>
    <name evidence="1" type="primary">rpl2</name>
    <name type="ordered locus">PAE0803</name>
</gene>
<accession>Q8ZYF5</accession>